<proteinExistence type="inferred from homology"/>
<evidence type="ECO:0000255" key="1">
    <source>
        <dbReference type="HAMAP-Rule" id="MF_01365"/>
    </source>
</evidence>
<evidence type="ECO:0000305" key="2"/>
<comment type="function">
    <text evidence="1">This protein binds to the 23S rRNA, and is important in its secondary structure. It is located near the subunit interface in the base of the L7/L12 stalk, and near the tRNA binding site of the peptidyltransferase center.</text>
</comment>
<comment type="subunit">
    <text evidence="1">Part of the 50S ribosomal subunit.</text>
</comment>
<comment type="similarity">
    <text evidence="1">Belongs to the universal ribosomal protein uL6 family.</text>
</comment>
<sequence length="191" mass="20630">MSRIGKLPIAIPPKVEVTLDGRRVVVKGPKGTLDLTLPDSVEVVREDGRLLVTRRGESRRAREQHGLGRTLVANMVTGVTTGFTKPMQIAGVGYRVALTGRKLTINAGFSHPIEIELPAGIDIEVDPKASAIAGTRNQQGFNFVIKGFDKQAVGDLAAKIRDIRPPEPYKGKGIRYTAEKILLKAGKSGKK</sequence>
<protein>
    <recommendedName>
        <fullName evidence="1">Large ribosomal subunit protein uL6</fullName>
    </recommendedName>
    <alternativeName>
        <fullName evidence="2">50S ribosomal protein L6</fullName>
    </alternativeName>
</protein>
<dbReference type="EMBL" id="BA000045">
    <property type="protein sequence ID" value="BAC91853.1"/>
    <property type="molecule type" value="Genomic_DNA"/>
</dbReference>
<dbReference type="RefSeq" id="NP_926858.1">
    <property type="nucleotide sequence ID" value="NC_005125.1"/>
</dbReference>
<dbReference type="RefSeq" id="WP_011143900.1">
    <property type="nucleotide sequence ID" value="NC_005125.1"/>
</dbReference>
<dbReference type="SMR" id="Q7NEG7"/>
<dbReference type="FunCoup" id="Q7NEG7">
    <property type="interactions" value="324"/>
</dbReference>
<dbReference type="STRING" id="251221.gene:10761429"/>
<dbReference type="EnsemblBacteria" id="BAC91853">
    <property type="protein sequence ID" value="BAC91853"/>
    <property type="gene ID" value="BAC91853"/>
</dbReference>
<dbReference type="KEGG" id="gvi:gll3912"/>
<dbReference type="PATRIC" id="fig|251221.4.peg.3945"/>
<dbReference type="eggNOG" id="COG0097">
    <property type="taxonomic scope" value="Bacteria"/>
</dbReference>
<dbReference type="HOGENOM" id="CLU_065464_1_2_3"/>
<dbReference type="InParanoid" id="Q7NEG7"/>
<dbReference type="OrthoDB" id="9805007at2"/>
<dbReference type="PhylomeDB" id="Q7NEG7"/>
<dbReference type="Proteomes" id="UP000000557">
    <property type="component" value="Chromosome"/>
</dbReference>
<dbReference type="GO" id="GO:0022625">
    <property type="term" value="C:cytosolic large ribosomal subunit"/>
    <property type="evidence" value="ECO:0000318"/>
    <property type="project" value="GO_Central"/>
</dbReference>
<dbReference type="GO" id="GO:0019843">
    <property type="term" value="F:rRNA binding"/>
    <property type="evidence" value="ECO:0007669"/>
    <property type="project" value="UniProtKB-UniRule"/>
</dbReference>
<dbReference type="GO" id="GO:0003735">
    <property type="term" value="F:structural constituent of ribosome"/>
    <property type="evidence" value="ECO:0000318"/>
    <property type="project" value="GO_Central"/>
</dbReference>
<dbReference type="GO" id="GO:0002181">
    <property type="term" value="P:cytoplasmic translation"/>
    <property type="evidence" value="ECO:0000318"/>
    <property type="project" value="GO_Central"/>
</dbReference>
<dbReference type="FunFam" id="3.90.930.12:FF:000002">
    <property type="entry name" value="50S ribosomal protein L6"/>
    <property type="match status" value="1"/>
</dbReference>
<dbReference type="Gene3D" id="3.90.930.12">
    <property type="entry name" value="Ribosomal protein L6, alpha-beta domain"/>
    <property type="match status" value="2"/>
</dbReference>
<dbReference type="HAMAP" id="MF_01365_B">
    <property type="entry name" value="Ribosomal_uL6_B"/>
    <property type="match status" value="1"/>
</dbReference>
<dbReference type="InterPro" id="IPR000702">
    <property type="entry name" value="Ribosomal_uL6-like"/>
</dbReference>
<dbReference type="InterPro" id="IPR036789">
    <property type="entry name" value="Ribosomal_uL6-like_a/b-dom_sf"/>
</dbReference>
<dbReference type="InterPro" id="IPR020040">
    <property type="entry name" value="Ribosomal_uL6_a/b-dom"/>
</dbReference>
<dbReference type="InterPro" id="IPR019906">
    <property type="entry name" value="Ribosomal_uL6_bac-type"/>
</dbReference>
<dbReference type="InterPro" id="IPR002358">
    <property type="entry name" value="Ribosomal_uL6_CS"/>
</dbReference>
<dbReference type="NCBIfam" id="TIGR03654">
    <property type="entry name" value="L6_bact"/>
    <property type="match status" value="1"/>
</dbReference>
<dbReference type="PANTHER" id="PTHR11655">
    <property type="entry name" value="60S/50S RIBOSOMAL PROTEIN L6/L9"/>
    <property type="match status" value="1"/>
</dbReference>
<dbReference type="PANTHER" id="PTHR11655:SF14">
    <property type="entry name" value="LARGE RIBOSOMAL SUBUNIT PROTEIN UL6M"/>
    <property type="match status" value="1"/>
</dbReference>
<dbReference type="Pfam" id="PF00347">
    <property type="entry name" value="Ribosomal_L6"/>
    <property type="match status" value="2"/>
</dbReference>
<dbReference type="PIRSF" id="PIRSF002162">
    <property type="entry name" value="Ribosomal_L6"/>
    <property type="match status" value="1"/>
</dbReference>
<dbReference type="PRINTS" id="PR00059">
    <property type="entry name" value="RIBOSOMALL6"/>
</dbReference>
<dbReference type="SUPFAM" id="SSF56053">
    <property type="entry name" value="Ribosomal protein L6"/>
    <property type="match status" value="2"/>
</dbReference>
<dbReference type="PROSITE" id="PS00525">
    <property type="entry name" value="RIBOSOMAL_L6_1"/>
    <property type="match status" value="1"/>
</dbReference>
<organism>
    <name type="scientific">Gloeobacter violaceus (strain ATCC 29082 / PCC 7421)</name>
    <dbReference type="NCBI Taxonomy" id="251221"/>
    <lineage>
        <taxon>Bacteria</taxon>
        <taxon>Bacillati</taxon>
        <taxon>Cyanobacteriota</taxon>
        <taxon>Cyanophyceae</taxon>
        <taxon>Gloeobacterales</taxon>
        <taxon>Gloeobacteraceae</taxon>
        <taxon>Gloeobacter</taxon>
    </lineage>
</organism>
<name>RL6_GLOVI</name>
<keyword id="KW-1185">Reference proteome</keyword>
<keyword id="KW-0687">Ribonucleoprotein</keyword>
<keyword id="KW-0689">Ribosomal protein</keyword>
<keyword id="KW-0694">RNA-binding</keyword>
<keyword id="KW-0699">rRNA-binding</keyword>
<gene>
    <name evidence="1" type="primary">rplF</name>
    <name evidence="1" type="synonym">rpl6</name>
    <name type="ordered locus">gll3912</name>
</gene>
<feature type="chain" id="PRO_0000265253" description="Large ribosomal subunit protein uL6">
    <location>
        <begin position="1"/>
        <end position="191"/>
    </location>
</feature>
<reference key="1">
    <citation type="journal article" date="2003" name="DNA Res.">
        <title>Complete genome structure of Gloeobacter violaceus PCC 7421, a cyanobacterium that lacks thylakoids.</title>
        <authorList>
            <person name="Nakamura Y."/>
            <person name="Kaneko T."/>
            <person name="Sato S."/>
            <person name="Mimuro M."/>
            <person name="Miyashita H."/>
            <person name="Tsuchiya T."/>
            <person name="Sasamoto S."/>
            <person name="Watanabe A."/>
            <person name="Kawashima K."/>
            <person name="Kishida Y."/>
            <person name="Kiyokawa C."/>
            <person name="Kohara M."/>
            <person name="Matsumoto M."/>
            <person name="Matsuno A."/>
            <person name="Nakazaki N."/>
            <person name="Shimpo S."/>
            <person name="Takeuchi C."/>
            <person name="Yamada M."/>
            <person name="Tabata S."/>
        </authorList>
    </citation>
    <scope>NUCLEOTIDE SEQUENCE [LARGE SCALE GENOMIC DNA]</scope>
    <source>
        <strain>ATCC 29082 / PCC 7421</strain>
    </source>
</reference>
<accession>Q7NEG7</accession>